<comment type="function">
    <text evidence="1">Involved in the biosynthesis of isopentenyl diphosphate (IPP) and dimethylallyl diphosphate (DMAPP), two major building blocks of isoprenoid compounds. Catalyzes the conversion of 4-diphosphocytidyl-2-C-methyl-D-erythritol 2-phosphate (CDP-ME2P) to 2-C-methyl-D-erythritol 2,4-cyclodiphosphate (ME-CPP) with a corresponding release of cytidine 5-monophosphate (CMP).</text>
</comment>
<comment type="catalytic activity">
    <reaction evidence="1">
        <text>4-CDP-2-C-methyl-D-erythritol 2-phosphate = 2-C-methyl-D-erythritol 2,4-cyclic diphosphate + CMP</text>
        <dbReference type="Rhea" id="RHEA:23864"/>
        <dbReference type="ChEBI" id="CHEBI:57919"/>
        <dbReference type="ChEBI" id="CHEBI:58483"/>
        <dbReference type="ChEBI" id="CHEBI:60377"/>
        <dbReference type="EC" id="4.6.1.12"/>
    </reaction>
</comment>
<comment type="cofactor">
    <cofactor evidence="1">
        <name>a divalent metal cation</name>
        <dbReference type="ChEBI" id="CHEBI:60240"/>
    </cofactor>
    <text evidence="1">Binds 1 divalent metal cation per subunit.</text>
</comment>
<comment type="pathway">
    <text evidence="1">Isoprenoid biosynthesis; isopentenyl diphosphate biosynthesis via DXP pathway; isopentenyl diphosphate from 1-deoxy-D-xylulose 5-phosphate: step 4/6.</text>
</comment>
<comment type="subunit">
    <text evidence="1">Homotrimer.</text>
</comment>
<comment type="similarity">
    <text evidence="1">Belongs to the IspF family.</text>
</comment>
<evidence type="ECO:0000255" key="1">
    <source>
        <dbReference type="HAMAP-Rule" id="MF_00107"/>
    </source>
</evidence>
<protein>
    <recommendedName>
        <fullName evidence="1">2-C-methyl-D-erythritol 2,4-cyclodiphosphate synthase</fullName>
        <shortName evidence="1">MECDP-synthase</shortName>
        <shortName evidence="1">MECPP-synthase</shortName>
        <shortName evidence="1">MECPS</shortName>
        <ecNumber evidence="1">4.6.1.12</ecNumber>
    </recommendedName>
</protein>
<accession>B7N6X6</accession>
<feature type="chain" id="PRO_1000117428" description="2-C-methyl-D-erythritol 2,4-cyclodiphosphate synthase">
    <location>
        <begin position="1"/>
        <end position="159"/>
    </location>
</feature>
<feature type="binding site" evidence="1">
    <location>
        <begin position="8"/>
        <end position="10"/>
    </location>
    <ligand>
        <name>4-CDP-2-C-methyl-D-erythritol 2-phosphate</name>
        <dbReference type="ChEBI" id="CHEBI:57919"/>
    </ligand>
</feature>
<feature type="binding site" evidence="1">
    <location>
        <position position="8"/>
    </location>
    <ligand>
        <name>a divalent metal cation</name>
        <dbReference type="ChEBI" id="CHEBI:60240"/>
    </ligand>
</feature>
<feature type="binding site" evidence="1">
    <location>
        <position position="10"/>
    </location>
    <ligand>
        <name>a divalent metal cation</name>
        <dbReference type="ChEBI" id="CHEBI:60240"/>
    </ligand>
</feature>
<feature type="binding site" evidence="1">
    <location>
        <begin position="34"/>
        <end position="35"/>
    </location>
    <ligand>
        <name>4-CDP-2-C-methyl-D-erythritol 2-phosphate</name>
        <dbReference type="ChEBI" id="CHEBI:57919"/>
    </ligand>
</feature>
<feature type="binding site" evidence="1">
    <location>
        <position position="42"/>
    </location>
    <ligand>
        <name>a divalent metal cation</name>
        <dbReference type="ChEBI" id="CHEBI:60240"/>
    </ligand>
</feature>
<feature type="binding site" evidence="1">
    <location>
        <begin position="56"/>
        <end position="58"/>
    </location>
    <ligand>
        <name>4-CDP-2-C-methyl-D-erythritol 2-phosphate</name>
        <dbReference type="ChEBI" id="CHEBI:57919"/>
    </ligand>
</feature>
<feature type="binding site" evidence="1">
    <location>
        <begin position="61"/>
        <end position="65"/>
    </location>
    <ligand>
        <name>4-CDP-2-C-methyl-D-erythritol 2-phosphate</name>
        <dbReference type="ChEBI" id="CHEBI:57919"/>
    </ligand>
</feature>
<feature type="binding site" evidence="1">
    <location>
        <begin position="100"/>
        <end position="106"/>
    </location>
    <ligand>
        <name>4-CDP-2-C-methyl-D-erythritol 2-phosphate</name>
        <dbReference type="ChEBI" id="CHEBI:57919"/>
    </ligand>
</feature>
<feature type="binding site" evidence="1">
    <location>
        <begin position="132"/>
        <end position="135"/>
    </location>
    <ligand>
        <name>4-CDP-2-C-methyl-D-erythritol 2-phosphate</name>
        <dbReference type="ChEBI" id="CHEBI:57919"/>
    </ligand>
</feature>
<feature type="binding site" evidence="1">
    <location>
        <position position="139"/>
    </location>
    <ligand>
        <name>4-CDP-2-C-methyl-D-erythritol 2-phosphate</name>
        <dbReference type="ChEBI" id="CHEBI:57919"/>
    </ligand>
</feature>
<feature type="binding site" evidence="1">
    <location>
        <position position="142"/>
    </location>
    <ligand>
        <name>4-CDP-2-C-methyl-D-erythritol 2-phosphate</name>
        <dbReference type="ChEBI" id="CHEBI:57919"/>
    </ligand>
</feature>
<feature type="site" description="Transition state stabilizer" evidence="1">
    <location>
        <position position="34"/>
    </location>
</feature>
<feature type="site" description="Transition state stabilizer" evidence="1">
    <location>
        <position position="133"/>
    </location>
</feature>
<dbReference type="EC" id="4.6.1.12" evidence="1"/>
<dbReference type="EMBL" id="CU928163">
    <property type="protein sequence ID" value="CAR14237.1"/>
    <property type="molecule type" value="Genomic_DNA"/>
</dbReference>
<dbReference type="RefSeq" id="WP_001219242.1">
    <property type="nucleotide sequence ID" value="NC_011751.1"/>
</dbReference>
<dbReference type="RefSeq" id="YP_002413759.1">
    <property type="nucleotide sequence ID" value="NC_011751.1"/>
</dbReference>
<dbReference type="SMR" id="B7N6X6"/>
<dbReference type="STRING" id="585056.ECUMN_3070"/>
<dbReference type="GeneID" id="93779260"/>
<dbReference type="KEGG" id="eum:ECUMN_3070"/>
<dbReference type="PATRIC" id="fig|585056.7.peg.3246"/>
<dbReference type="HOGENOM" id="CLU_084630_2_0_6"/>
<dbReference type="UniPathway" id="UPA00056">
    <property type="reaction ID" value="UER00095"/>
</dbReference>
<dbReference type="Proteomes" id="UP000007097">
    <property type="component" value="Chromosome"/>
</dbReference>
<dbReference type="GO" id="GO:0008685">
    <property type="term" value="F:2-C-methyl-D-erythritol 2,4-cyclodiphosphate synthase activity"/>
    <property type="evidence" value="ECO:0007669"/>
    <property type="project" value="UniProtKB-UniRule"/>
</dbReference>
<dbReference type="GO" id="GO:0046872">
    <property type="term" value="F:metal ion binding"/>
    <property type="evidence" value="ECO:0007669"/>
    <property type="project" value="UniProtKB-KW"/>
</dbReference>
<dbReference type="GO" id="GO:0019288">
    <property type="term" value="P:isopentenyl diphosphate biosynthetic process, methylerythritol 4-phosphate pathway"/>
    <property type="evidence" value="ECO:0007669"/>
    <property type="project" value="UniProtKB-UniRule"/>
</dbReference>
<dbReference type="GO" id="GO:0016114">
    <property type="term" value="P:terpenoid biosynthetic process"/>
    <property type="evidence" value="ECO:0007669"/>
    <property type="project" value="InterPro"/>
</dbReference>
<dbReference type="CDD" id="cd00554">
    <property type="entry name" value="MECDP_synthase"/>
    <property type="match status" value="1"/>
</dbReference>
<dbReference type="FunFam" id="3.30.1330.50:FF:000001">
    <property type="entry name" value="2-C-methyl-D-erythritol 2,4-cyclodiphosphate synthase"/>
    <property type="match status" value="1"/>
</dbReference>
<dbReference type="Gene3D" id="3.30.1330.50">
    <property type="entry name" value="2-C-methyl-D-erythritol 2,4-cyclodiphosphate synthase"/>
    <property type="match status" value="1"/>
</dbReference>
<dbReference type="HAMAP" id="MF_00107">
    <property type="entry name" value="IspF"/>
    <property type="match status" value="1"/>
</dbReference>
<dbReference type="InterPro" id="IPR003526">
    <property type="entry name" value="MECDP_synthase"/>
</dbReference>
<dbReference type="InterPro" id="IPR020555">
    <property type="entry name" value="MECDP_synthase_CS"/>
</dbReference>
<dbReference type="InterPro" id="IPR036571">
    <property type="entry name" value="MECDP_synthase_sf"/>
</dbReference>
<dbReference type="NCBIfam" id="TIGR00151">
    <property type="entry name" value="ispF"/>
    <property type="match status" value="1"/>
</dbReference>
<dbReference type="PANTHER" id="PTHR43181">
    <property type="entry name" value="2-C-METHYL-D-ERYTHRITOL 2,4-CYCLODIPHOSPHATE SYNTHASE, CHLOROPLASTIC"/>
    <property type="match status" value="1"/>
</dbReference>
<dbReference type="PANTHER" id="PTHR43181:SF1">
    <property type="entry name" value="2-C-METHYL-D-ERYTHRITOL 2,4-CYCLODIPHOSPHATE SYNTHASE, CHLOROPLASTIC"/>
    <property type="match status" value="1"/>
</dbReference>
<dbReference type="Pfam" id="PF02542">
    <property type="entry name" value="YgbB"/>
    <property type="match status" value="1"/>
</dbReference>
<dbReference type="SUPFAM" id="SSF69765">
    <property type="entry name" value="IpsF-like"/>
    <property type="match status" value="1"/>
</dbReference>
<dbReference type="PROSITE" id="PS01350">
    <property type="entry name" value="ISPF"/>
    <property type="match status" value="1"/>
</dbReference>
<keyword id="KW-0414">Isoprene biosynthesis</keyword>
<keyword id="KW-0456">Lyase</keyword>
<keyword id="KW-0479">Metal-binding</keyword>
<sequence length="159" mass="16898">MRIGHGFDVHAFGGEGPIIIGGVRIPYEKGLLAHSDGDVALHALTDALLGAAALGDIGKLFPDTDPAFKGADSRELLREAWRRIQAKGYTLGNVDVTIIAQAPKMLPHIPQMRVFIAEDLGCHMDDVNVKATTTEKLGFTGRGEGIACEAVALLIKATK</sequence>
<organism>
    <name type="scientific">Escherichia coli O17:K52:H18 (strain UMN026 / ExPEC)</name>
    <dbReference type="NCBI Taxonomy" id="585056"/>
    <lineage>
        <taxon>Bacteria</taxon>
        <taxon>Pseudomonadati</taxon>
        <taxon>Pseudomonadota</taxon>
        <taxon>Gammaproteobacteria</taxon>
        <taxon>Enterobacterales</taxon>
        <taxon>Enterobacteriaceae</taxon>
        <taxon>Escherichia</taxon>
    </lineage>
</organism>
<reference key="1">
    <citation type="journal article" date="2009" name="PLoS Genet.">
        <title>Organised genome dynamics in the Escherichia coli species results in highly diverse adaptive paths.</title>
        <authorList>
            <person name="Touchon M."/>
            <person name="Hoede C."/>
            <person name="Tenaillon O."/>
            <person name="Barbe V."/>
            <person name="Baeriswyl S."/>
            <person name="Bidet P."/>
            <person name="Bingen E."/>
            <person name="Bonacorsi S."/>
            <person name="Bouchier C."/>
            <person name="Bouvet O."/>
            <person name="Calteau A."/>
            <person name="Chiapello H."/>
            <person name="Clermont O."/>
            <person name="Cruveiller S."/>
            <person name="Danchin A."/>
            <person name="Diard M."/>
            <person name="Dossat C."/>
            <person name="Karoui M.E."/>
            <person name="Frapy E."/>
            <person name="Garry L."/>
            <person name="Ghigo J.M."/>
            <person name="Gilles A.M."/>
            <person name="Johnson J."/>
            <person name="Le Bouguenec C."/>
            <person name="Lescat M."/>
            <person name="Mangenot S."/>
            <person name="Martinez-Jehanne V."/>
            <person name="Matic I."/>
            <person name="Nassif X."/>
            <person name="Oztas S."/>
            <person name="Petit M.A."/>
            <person name="Pichon C."/>
            <person name="Rouy Z."/>
            <person name="Ruf C.S."/>
            <person name="Schneider D."/>
            <person name="Tourret J."/>
            <person name="Vacherie B."/>
            <person name="Vallenet D."/>
            <person name="Medigue C."/>
            <person name="Rocha E.P.C."/>
            <person name="Denamur E."/>
        </authorList>
    </citation>
    <scope>NUCLEOTIDE SEQUENCE [LARGE SCALE GENOMIC DNA]</scope>
    <source>
        <strain>UMN026 / ExPEC</strain>
    </source>
</reference>
<name>ISPF_ECOLU</name>
<gene>
    <name evidence="1" type="primary">ispF</name>
    <name type="ordered locus">ECUMN_3070</name>
</gene>
<proteinExistence type="inferred from homology"/>